<evidence type="ECO:0000250" key="1"/>
<evidence type="ECO:0000255" key="2">
    <source>
        <dbReference type="PROSITE-ProRule" id="PRU10101"/>
    </source>
</evidence>
<evidence type="ECO:0000269" key="3">
    <source>
    </source>
</evidence>
<evidence type="ECO:0000305" key="4"/>
<evidence type="ECO:0000305" key="5">
    <source>
    </source>
</evidence>
<accession>P10424</accession>
<protein>
    <recommendedName>
        <fullName>Beta-lactamase 1</fullName>
        <ecNumber>3.5.2.6</ecNumber>
    </recommendedName>
    <alternativeName>
        <fullName>Beta-lactamase I</fullName>
    </alternativeName>
    <alternativeName>
        <fullName>Penicillinase</fullName>
    </alternativeName>
</protein>
<comment type="function">
    <text>Acts preferentially on penicillins.</text>
</comment>
<comment type="catalytic activity">
    <reaction evidence="2">
        <text>a beta-lactam + H2O = a substituted beta-amino acid</text>
        <dbReference type="Rhea" id="RHEA:20401"/>
        <dbReference type="ChEBI" id="CHEBI:15377"/>
        <dbReference type="ChEBI" id="CHEBI:35627"/>
        <dbReference type="ChEBI" id="CHEBI:140347"/>
        <dbReference type="EC" id="3.5.2.6"/>
    </reaction>
</comment>
<comment type="subcellular location">
    <subcellularLocation>
        <location>Secreted</location>
    </subcellularLocation>
</comment>
<comment type="miscellaneous">
    <text evidence="5">The class A beta-lactamase family has a specific amino-acid numbering system, sometimes called Ambler or ABL numbering and often misspelt as Amber. A multiple sequence alignment was used to derive a consensus sequence and then the consensus was numbered taking into account insertions and deletions. This allows use of identical numbers, e.g. for active site residues, despite differences in protein length. UniProt always uses natural numbering of residues, hence there appear to be differences in numbering between this entry and some papers.</text>
</comment>
<comment type="similarity">
    <text evidence="4">Belongs to the class-A beta-lactamase family.</text>
</comment>
<gene>
    <name type="primary">penPC</name>
</gene>
<organism>
    <name type="scientific">Bacillus cereus</name>
    <dbReference type="NCBI Taxonomy" id="1396"/>
    <lineage>
        <taxon>Bacteria</taxon>
        <taxon>Bacillati</taxon>
        <taxon>Bacillota</taxon>
        <taxon>Bacilli</taxon>
        <taxon>Bacillales</taxon>
        <taxon>Bacillaceae</taxon>
        <taxon>Bacillus</taxon>
        <taxon>Bacillus cereus group</taxon>
    </lineage>
</organism>
<keyword id="KW-0046">Antibiotic resistance</keyword>
<keyword id="KW-0903">Direct protein sequencing</keyword>
<keyword id="KW-0378">Hydrolase</keyword>
<keyword id="KW-0964">Secreted</keyword>
<keyword id="KW-0732">Signal</keyword>
<feature type="signal peptide" evidence="3">
    <location>
        <begin position="1"/>
        <end position="43"/>
    </location>
</feature>
<feature type="chain" id="PRO_0000016971" description="Beta-lactamase 1">
    <location>
        <begin position="44"/>
        <end position="306"/>
    </location>
</feature>
<feature type="active site" description="Acyl-ester intermediate" evidence="2">
    <location>
        <position position="89"/>
    </location>
</feature>
<feature type="active site" description="Proton acceptor" evidence="1">
    <location>
        <position position="185"/>
    </location>
</feature>
<feature type="binding site" evidence="1">
    <location>
        <begin position="251"/>
        <end position="253"/>
    </location>
    <ligand>
        <name>substrate</name>
    </ligand>
</feature>
<name>BLA1_BACCE</name>
<dbReference type="EC" id="3.5.2.6"/>
<dbReference type="EMBL" id="M12607">
    <property type="protein sequence ID" value="AAA22668.1"/>
    <property type="molecule type" value="Genomic_DNA"/>
</dbReference>
<dbReference type="PIR" id="A23097">
    <property type="entry name" value="PNBS5B"/>
</dbReference>
<dbReference type="SMR" id="P10424"/>
<dbReference type="BindingDB" id="P10424"/>
<dbReference type="DrugCentral" id="P10424"/>
<dbReference type="eggNOG" id="COG2367">
    <property type="taxonomic scope" value="Bacteria"/>
</dbReference>
<dbReference type="GO" id="GO:0005576">
    <property type="term" value="C:extracellular region"/>
    <property type="evidence" value="ECO:0007669"/>
    <property type="project" value="UniProtKB-SubCell"/>
</dbReference>
<dbReference type="GO" id="GO:0008800">
    <property type="term" value="F:beta-lactamase activity"/>
    <property type="evidence" value="ECO:0007669"/>
    <property type="project" value="UniProtKB-EC"/>
</dbReference>
<dbReference type="GO" id="GO:0030655">
    <property type="term" value="P:beta-lactam antibiotic catabolic process"/>
    <property type="evidence" value="ECO:0007669"/>
    <property type="project" value="InterPro"/>
</dbReference>
<dbReference type="GO" id="GO:0046677">
    <property type="term" value="P:response to antibiotic"/>
    <property type="evidence" value="ECO:0007669"/>
    <property type="project" value="UniProtKB-KW"/>
</dbReference>
<dbReference type="Gene3D" id="3.40.710.10">
    <property type="entry name" value="DD-peptidase/beta-lactamase superfamily"/>
    <property type="match status" value="1"/>
</dbReference>
<dbReference type="InterPro" id="IPR012338">
    <property type="entry name" value="Beta-lactam/transpept-like"/>
</dbReference>
<dbReference type="InterPro" id="IPR045155">
    <property type="entry name" value="Beta-lactam_cat"/>
</dbReference>
<dbReference type="InterPro" id="IPR000871">
    <property type="entry name" value="Beta-lactam_class-A"/>
</dbReference>
<dbReference type="InterPro" id="IPR023650">
    <property type="entry name" value="Beta-lactam_class-A_AS"/>
</dbReference>
<dbReference type="NCBIfam" id="NF033096">
    <property type="entry name" value="bla1"/>
    <property type="match status" value="1"/>
</dbReference>
<dbReference type="NCBIfam" id="NF033103">
    <property type="entry name" value="bla_class_A"/>
    <property type="match status" value="1"/>
</dbReference>
<dbReference type="NCBIfam" id="NF012167">
    <property type="entry name" value="classA_firm"/>
    <property type="match status" value="1"/>
</dbReference>
<dbReference type="PANTHER" id="PTHR35333">
    <property type="entry name" value="BETA-LACTAMASE"/>
    <property type="match status" value="1"/>
</dbReference>
<dbReference type="PANTHER" id="PTHR35333:SF3">
    <property type="entry name" value="BETA-LACTAMASE-TYPE TRANSPEPTIDASE FOLD CONTAINING PROTEIN"/>
    <property type="match status" value="1"/>
</dbReference>
<dbReference type="Pfam" id="PF13354">
    <property type="entry name" value="Beta-lactamase2"/>
    <property type="match status" value="1"/>
</dbReference>
<dbReference type="PRINTS" id="PR00118">
    <property type="entry name" value="BLACTAMASEA"/>
</dbReference>
<dbReference type="SUPFAM" id="SSF56601">
    <property type="entry name" value="beta-lactamase/transpeptidase-like"/>
    <property type="match status" value="1"/>
</dbReference>
<dbReference type="PROSITE" id="PS00146">
    <property type="entry name" value="BETA_LACTAMASE_A"/>
    <property type="match status" value="1"/>
</dbReference>
<proteinExistence type="evidence at protein level"/>
<reference key="1">
    <citation type="journal article" date="1985" name="J. Bacteriol.">
        <title>Cloning and sequencing of the beta-lactamase I gene of Bacillus cereus 5/B and its expression in Bacillus subtilis.</title>
        <authorList>
            <person name="Wang W."/>
            <person name="Mezes P.S.F."/>
            <person name="Yang Y.Q."/>
            <person name="Blacher R.W."/>
            <person name="Lampen J.O."/>
        </authorList>
    </citation>
    <scope>NUCLEOTIDE SEQUENCE [GENOMIC DNA]</scope>
    <scope>PROTEIN SEQUENCE OF 44-63</scope>
    <source>
        <strain>ATCC 13061 / DSM 6127 / NCIMB 8967 / NCTC 9946 / NRRL B-3537 / 5/B</strain>
    </source>
</reference>
<reference key="2">
    <citation type="journal article" date="1991" name="Biochem. J.">
        <title>A standard numbering scheme for the class A beta-lactamases.</title>
        <authorList>
            <person name="Ambler R.P."/>
            <person name="Coulson A.F."/>
            <person name="Frere J.M."/>
            <person name="Ghuysen J.M."/>
            <person name="Joris B."/>
            <person name="Forsman M."/>
            <person name="Levesque R.C."/>
            <person name="Tiraby G."/>
            <person name="Waley S.G."/>
        </authorList>
    </citation>
    <scope>AMINO ACID NUMBERING SCHEME</scope>
</reference>
<sequence>MKNKKMLKIGMCVGILGLSITSLVTFTGGALQVEAKEKTGQVKHKNQATHKEFSQLEKKFDARLGVYAIDTGTNQTIAYRPNERFAFASTYKALAAGVLLQQNSTKKLDEVITYTKEDLVDYSPVTEKHVDTGMTLGEIAEAAVRYSDNTAGNILFHKIGGPKGYEKALRKMGDRVTMSDRFETELNEAIPGDIRDTSTAKAIARNLKDFTVGNALPHQKRNILTEWMKGNATGDKLIRAGVPTDWVDADKSGAGSYGTRNDIAIVWPPNRSPIIIAILSSKDEKEATYDNQLIKEAAEVVIDAIK</sequence>